<evidence type="ECO:0000250" key="1">
    <source>
        <dbReference type="UniProtKB" id="P03633"/>
    </source>
</evidence>
<evidence type="ECO:0000256" key="2">
    <source>
        <dbReference type="SAM" id="MobiDB-lite"/>
    </source>
</evidence>
<evidence type="ECO:0000305" key="3"/>
<reference key="1">
    <citation type="journal article" date="1978" name="Nature">
        <title>Nucleotide sequence of bacteriophage G4 DNA.</title>
        <authorList>
            <person name="Godson G.N."/>
            <person name="Barrell B.G."/>
            <person name="Staden R."/>
            <person name="Fiddes J.C."/>
        </authorList>
    </citation>
    <scope>NUCLEOTIDE SEQUENCE [GENOMIC DNA]</scope>
</reference>
<reference key="2">
    <citation type="journal article" date="1979" name="J. Mol. Biol.">
        <title>Evolution of the three overlapping gene systems in G4 and phi X174.</title>
        <authorList>
            <person name="Fiddes J.C."/>
            <person name="Godson G.N."/>
        </authorList>
    </citation>
    <scope>NUCLEOTIDE SEQUENCE [GENOMIC DNA]</scope>
</reference>
<comment type="function">
    <text evidence="1">Participates in the assembly of the viral procapsid in the cytoplasm. Forms first a 12S pre-assembly complex with protein H, and F and G pentamers, then twelve 12S complexes are joined by the D protein to form the procapsid. Internal scaffold protein B is released from the procapsid upon genome packaging. Autoproteolytic activity cleaves protein B and probably facilitates its removal through the pores of the procapsid.</text>
</comment>
<comment type="subunit">
    <text evidence="1">Component of the procapsid complex composed of 60 copies of the internally located B, 240 copies of the external scaffolding protein D, 60 copies of each of the viral structural proteins F and G proteins, and 12 copies of H.</text>
</comment>
<comment type="subcellular location">
    <subcellularLocation>
        <location evidence="1">Host cytoplasm</location>
    </subcellularLocation>
</comment>
<comment type="PTM">
    <text evidence="1">The proteolytic cleavage of the internal scaffolding protein B releases the scaffold protein in order to continue virion assembly.</text>
</comment>
<comment type="similarity">
    <text evidence="3">Belongs to the microviridae B protein family.</text>
</comment>
<keyword id="KW-0068">Autocatalytic cleavage</keyword>
<keyword id="KW-1035">Host cytoplasm</keyword>
<keyword id="KW-0378">Hydrolase</keyword>
<keyword id="KW-0645">Protease</keyword>
<keyword id="KW-1185">Reference proteome</keyword>
<keyword id="KW-0118">Viral capsid assembly</keyword>
<keyword id="KW-1188">Viral release from host cell</keyword>
<gene>
    <name type="primary">B</name>
</gene>
<organismHost>
    <name type="scientific">Escherichia coli</name>
    <dbReference type="NCBI Taxonomy" id="562"/>
</organismHost>
<proteinExistence type="inferred from homology"/>
<feature type="chain" id="PRO_0000164868" description="Internal scaffolding protein B">
    <location>
        <begin position="1"/>
        <end position="120"/>
    </location>
</feature>
<feature type="region of interest" description="Disordered" evidence="2">
    <location>
        <begin position="1"/>
        <end position="65"/>
    </location>
</feature>
<feature type="compositionally biased region" description="Polar residues" evidence="2">
    <location>
        <begin position="1"/>
        <end position="37"/>
    </location>
</feature>
<feature type="compositionally biased region" description="Basic and acidic residues" evidence="2">
    <location>
        <begin position="47"/>
        <end position="65"/>
    </location>
</feature>
<feature type="site" description="Cleavage; by host" evidence="1">
    <location>
        <begin position="76"/>
        <end position="77"/>
    </location>
</feature>
<feature type="site" description="Cleavage; by autolysis" evidence="1">
    <location>
        <begin position="77"/>
        <end position="78"/>
    </location>
</feature>
<feature type="site" description="Cleavage; by autolysis" evidence="1">
    <location>
        <begin position="93"/>
        <end position="94"/>
    </location>
</feature>
<feature type="site" description="Cleavage; by autolysis" evidence="1">
    <location>
        <begin position="108"/>
        <end position="109"/>
    </location>
</feature>
<sequence>MEQFTQNQNQPHTQESVQNTNVSQFRNETVINGSPVSGNPDGTDPSGLRRDPVQQHLEAERQERAQIEAGKEICRRRFGGATCDDESAKIHAQFDPNNRSVQPTEFYRFNDHEINKYGYF</sequence>
<dbReference type="EC" id="3.4.-.-" evidence="1"/>
<dbReference type="EMBL" id="V00657">
    <property type="protein sequence ID" value="CAA24013.1"/>
    <property type="molecule type" value="Genomic_DNA"/>
</dbReference>
<dbReference type="EMBL" id="M10636">
    <property type="protein sequence ID" value="AAA32314.1"/>
    <property type="molecule type" value="Genomic_DNA"/>
</dbReference>
<dbReference type="PIR" id="A04242">
    <property type="entry name" value="ZBBPG4"/>
</dbReference>
<dbReference type="SMR" id="P03634"/>
<dbReference type="OrthoDB" id="21965at10239"/>
<dbReference type="Proteomes" id="UP000002140">
    <property type="component" value="Segment"/>
</dbReference>
<dbReference type="GO" id="GO:0030430">
    <property type="term" value="C:host cell cytoplasm"/>
    <property type="evidence" value="ECO:0007669"/>
    <property type="project" value="UniProtKB-SubCell"/>
</dbReference>
<dbReference type="GO" id="GO:0008233">
    <property type="term" value="F:peptidase activity"/>
    <property type="evidence" value="ECO:0007669"/>
    <property type="project" value="UniProtKB-KW"/>
</dbReference>
<dbReference type="GO" id="GO:0006508">
    <property type="term" value="P:proteolysis"/>
    <property type="evidence" value="ECO:0007669"/>
    <property type="project" value="UniProtKB-KW"/>
</dbReference>
<dbReference type="GO" id="GO:0019069">
    <property type="term" value="P:viral capsid assembly"/>
    <property type="evidence" value="ECO:0007669"/>
    <property type="project" value="InterPro"/>
</dbReference>
<dbReference type="Gene3D" id="4.10.1260.10">
    <property type="entry name" value="Scaffolding protein gpD of bacteriophage procapsid"/>
    <property type="match status" value="1"/>
</dbReference>
<dbReference type="InterPro" id="IPR003513">
    <property type="entry name" value="Phage_B"/>
</dbReference>
<dbReference type="InterPro" id="IPR038149">
    <property type="entry name" value="Phage_B_sf"/>
</dbReference>
<dbReference type="Pfam" id="PF02304">
    <property type="entry name" value="Phage_B"/>
    <property type="match status" value="1"/>
</dbReference>
<protein>
    <recommendedName>
        <fullName>Internal scaffolding protein B</fullName>
        <ecNumber evidence="1">3.4.-.-</ecNumber>
    </recommendedName>
    <alternativeName>
        <fullName>Scaffolding protein B</fullName>
        <shortName>GPB</shortName>
    </alternativeName>
</protein>
<name>SCAFB_BPG4</name>
<organism>
    <name type="scientific">Escherichia phage G4</name>
    <name type="common">Bacteriophage G4</name>
    <dbReference type="NCBI Taxonomy" id="10843"/>
    <lineage>
        <taxon>Viruses</taxon>
        <taxon>Monodnaviria</taxon>
        <taxon>Sangervirae</taxon>
        <taxon>Phixviricota</taxon>
        <taxon>Malgrandaviricetes</taxon>
        <taxon>Petitvirales</taxon>
        <taxon>Microviridae</taxon>
        <taxon>Bullavirinae</taxon>
        <taxon>Gequatrovirus</taxon>
        <taxon>Gequatrovirus G4</taxon>
    </lineage>
</organism>
<accession>P03634</accession>